<proteinExistence type="inferred from homology"/>
<evidence type="ECO:0000255" key="1">
    <source>
        <dbReference type="HAMAP-Rule" id="MF_00268"/>
    </source>
</evidence>
<evidence type="ECO:0000256" key="2">
    <source>
        <dbReference type="SAM" id="MobiDB-lite"/>
    </source>
</evidence>
<keyword id="KW-0067">ATP-binding</keyword>
<keyword id="KW-0963">Cytoplasm</keyword>
<keyword id="KW-0227">DNA damage</keyword>
<keyword id="KW-0233">DNA recombination</keyword>
<keyword id="KW-0234">DNA repair</keyword>
<keyword id="KW-0238">DNA-binding</keyword>
<keyword id="KW-0547">Nucleotide-binding</keyword>
<keyword id="KW-0742">SOS response</keyword>
<feature type="chain" id="PRO_0000122747" description="Protein RecA">
    <location>
        <begin position="1"/>
        <end position="348"/>
    </location>
</feature>
<feature type="region of interest" description="Disordered" evidence="2">
    <location>
        <begin position="324"/>
        <end position="348"/>
    </location>
</feature>
<feature type="compositionally biased region" description="Basic and acidic residues" evidence="2">
    <location>
        <begin position="324"/>
        <end position="335"/>
    </location>
</feature>
<feature type="compositionally biased region" description="Acidic residues" evidence="2">
    <location>
        <begin position="336"/>
        <end position="348"/>
    </location>
</feature>
<feature type="binding site" evidence="1">
    <location>
        <begin position="64"/>
        <end position="71"/>
    </location>
    <ligand>
        <name>ATP</name>
        <dbReference type="ChEBI" id="CHEBI:30616"/>
    </ligand>
</feature>
<reference key="1">
    <citation type="submission" date="2002-07" db="EMBL/GenBank/DDBJ databases">
        <title>Molecular evolution of Listeria spp. and Listeria monocytogenes.</title>
        <authorList>
            <person name="Cai S."/>
            <person name="Nielsen R."/>
            <person name="Roberts A.J."/>
            <person name="Wiedmann M."/>
        </authorList>
    </citation>
    <scope>NUCLEOTIDE SEQUENCE [GENOMIC DNA]</scope>
    <source>
        <strain>FSLc2010</strain>
        <strain>FSLc2011</strain>
    </source>
</reference>
<comment type="function">
    <text evidence="1">Can catalyze the hydrolysis of ATP in the presence of single-stranded DNA, the ATP-dependent uptake of single-stranded DNA by duplex DNA, and the ATP-dependent hybridization of homologous single-stranded DNAs. It interacts with LexA causing its activation and leading to its autocatalytic cleavage.</text>
</comment>
<comment type="subcellular location">
    <subcellularLocation>
        <location evidence="1">Cytoplasm</location>
    </subcellularLocation>
</comment>
<comment type="similarity">
    <text evidence="1">Belongs to the RecA family.</text>
</comment>
<organism>
    <name type="scientific">Listeria ivanovii</name>
    <dbReference type="NCBI Taxonomy" id="1638"/>
    <lineage>
        <taxon>Bacteria</taxon>
        <taxon>Bacillati</taxon>
        <taxon>Bacillota</taxon>
        <taxon>Bacilli</taxon>
        <taxon>Bacillales</taxon>
        <taxon>Listeriaceae</taxon>
        <taxon>Listeria</taxon>
    </lineage>
</organism>
<protein>
    <recommendedName>
        <fullName evidence="1">Protein RecA</fullName>
    </recommendedName>
    <alternativeName>
        <fullName evidence="1">Recombinase A</fullName>
    </alternativeName>
</protein>
<name>RECA_LISIV</name>
<accession>Q83TH2</accession>
<dbReference type="EMBL" id="AY135422">
    <property type="protein sequence ID" value="AAN15812.1"/>
    <property type="molecule type" value="Genomic_DNA"/>
</dbReference>
<dbReference type="EMBL" id="AY135423">
    <property type="protein sequence ID" value="AAN15813.1"/>
    <property type="molecule type" value="Genomic_DNA"/>
</dbReference>
<dbReference type="RefSeq" id="WP_003719674.1">
    <property type="nucleotide sequence ID" value="NZ_RBYJ01000006.1"/>
</dbReference>
<dbReference type="SMR" id="Q83TH2"/>
<dbReference type="GeneID" id="57076330"/>
<dbReference type="OMA" id="DSKMGLH"/>
<dbReference type="GO" id="GO:0005829">
    <property type="term" value="C:cytosol"/>
    <property type="evidence" value="ECO:0007669"/>
    <property type="project" value="TreeGrafter"/>
</dbReference>
<dbReference type="GO" id="GO:0005524">
    <property type="term" value="F:ATP binding"/>
    <property type="evidence" value="ECO:0007669"/>
    <property type="project" value="UniProtKB-UniRule"/>
</dbReference>
<dbReference type="GO" id="GO:0016887">
    <property type="term" value="F:ATP hydrolysis activity"/>
    <property type="evidence" value="ECO:0007669"/>
    <property type="project" value="InterPro"/>
</dbReference>
<dbReference type="GO" id="GO:0140664">
    <property type="term" value="F:ATP-dependent DNA damage sensor activity"/>
    <property type="evidence" value="ECO:0007669"/>
    <property type="project" value="InterPro"/>
</dbReference>
<dbReference type="GO" id="GO:0003684">
    <property type="term" value="F:damaged DNA binding"/>
    <property type="evidence" value="ECO:0007669"/>
    <property type="project" value="UniProtKB-UniRule"/>
</dbReference>
<dbReference type="GO" id="GO:0003697">
    <property type="term" value="F:single-stranded DNA binding"/>
    <property type="evidence" value="ECO:0007669"/>
    <property type="project" value="UniProtKB-UniRule"/>
</dbReference>
<dbReference type="GO" id="GO:0006310">
    <property type="term" value="P:DNA recombination"/>
    <property type="evidence" value="ECO:0007669"/>
    <property type="project" value="UniProtKB-UniRule"/>
</dbReference>
<dbReference type="GO" id="GO:0006281">
    <property type="term" value="P:DNA repair"/>
    <property type="evidence" value="ECO:0007669"/>
    <property type="project" value="UniProtKB-UniRule"/>
</dbReference>
<dbReference type="GO" id="GO:0009432">
    <property type="term" value="P:SOS response"/>
    <property type="evidence" value="ECO:0007669"/>
    <property type="project" value="UniProtKB-UniRule"/>
</dbReference>
<dbReference type="CDD" id="cd00983">
    <property type="entry name" value="RecA"/>
    <property type="match status" value="1"/>
</dbReference>
<dbReference type="FunFam" id="3.40.50.300:FF:000087">
    <property type="entry name" value="Recombinase RecA"/>
    <property type="match status" value="1"/>
</dbReference>
<dbReference type="Gene3D" id="3.40.50.300">
    <property type="entry name" value="P-loop containing nucleotide triphosphate hydrolases"/>
    <property type="match status" value="1"/>
</dbReference>
<dbReference type="HAMAP" id="MF_00268">
    <property type="entry name" value="RecA"/>
    <property type="match status" value="1"/>
</dbReference>
<dbReference type="InterPro" id="IPR003593">
    <property type="entry name" value="AAA+_ATPase"/>
</dbReference>
<dbReference type="InterPro" id="IPR013765">
    <property type="entry name" value="DNA_recomb/repair_RecA"/>
</dbReference>
<dbReference type="InterPro" id="IPR020584">
    <property type="entry name" value="DNA_recomb/repair_RecA_CS"/>
</dbReference>
<dbReference type="InterPro" id="IPR027417">
    <property type="entry name" value="P-loop_NTPase"/>
</dbReference>
<dbReference type="InterPro" id="IPR049261">
    <property type="entry name" value="RecA-like_C"/>
</dbReference>
<dbReference type="InterPro" id="IPR049428">
    <property type="entry name" value="RecA-like_N"/>
</dbReference>
<dbReference type="InterPro" id="IPR020588">
    <property type="entry name" value="RecA_ATP-bd"/>
</dbReference>
<dbReference type="InterPro" id="IPR023400">
    <property type="entry name" value="RecA_C_sf"/>
</dbReference>
<dbReference type="InterPro" id="IPR020587">
    <property type="entry name" value="RecA_monomer-monomer_interface"/>
</dbReference>
<dbReference type="NCBIfam" id="TIGR02012">
    <property type="entry name" value="tigrfam_recA"/>
    <property type="match status" value="1"/>
</dbReference>
<dbReference type="PANTHER" id="PTHR45900:SF1">
    <property type="entry name" value="MITOCHONDRIAL DNA REPAIR PROTEIN RECA HOMOLOG-RELATED"/>
    <property type="match status" value="1"/>
</dbReference>
<dbReference type="PANTHER" id="PTHR45900">
    <property type="entry name" value="RECA"/>
    <property type="match status" value="1"/>
</dbReference>
<dbReference type="Pfam" id="PF00154">
    <property type="entry name" value="RecA"/>
    <property type="match status" value="1"/>
</dbReference>
<dbReference type="Pfam" id="PF21096">
    <property type="entry name" value="RecA_C"/>
    <property type="match status" value="1"/>
</dbReference>
<dbReference type="PRINTS" id="PR00142">
    <property type="entry name" value="RECA"/>
</dbReference>
<dbReference type="SMART" id="SM00382">
    <property type="entry name" value="AAA"/>
    <property type="match status" value="1"/>
</dbReference>
<dbReference type="SUPFAM" id="SSF52540">
    <property type="entry name" value="P-loop containing nucleoside triphosphate hydrolases"/>
    <property type="match status" value="1"/>
</dbReference>
<dbReference type="SUPFAM" id="SSF54752">
    <property type="entry name" value="RecA protein, C-terminal domain"/>
    <property type="match status" value="1"/>
</dbReference>
<dbReference type="PROSITE" id="PS00321">
    <property type="entry name" value="RECA_1"/>
    <property type="match status" value="1"/>
</dbReference>
<dbReference type="PROSITE" id="PS50162">
    <property type="entry name" value="RECA_2"/>
    <property type="match status" value="1"/>
</dbReference>
<dbReference type="PROSITE" id="PS50163">
    <property type="entry name" value="RECA_3"/>
    <property type="match status" value="1"/>
</dbReference>
<gene>
    <name evidence="1" type="primary">recA</name>
</gene>
<sequence length="348" mass="37922">MNDRQAALDQALKQIEKQFGKGSIMKLGEHSDQNISTISSGSLALDIALGVGGYPRGRIIEVYGPESSGKTTVALHAIAEVQAQGGTAAFIDAEHALDPAYAKNLGVNIDELLLSQPDTGEQALEIAEALVRSGAVDMLVIDSVAALVPRAEIEGEMGDAHVGLQARLMSQALRKLSGAINKSKTIAIFINQIREKVGVMFGNPEITPGGRALKFYSTVRLEVRRAEQLKQGTDVMGNKTKIKVVKNKVAPPFRIAEVDIMYGEGISREGELVDMAAEVDVINKSGSWYSYKEERIGQGRENAKQYLKEHTDIRDEISKRVREEYEIDGSNKEPLAETEETLSLLDDE</sequence>